<feature type="chain" id="PRO_0000437348" description="Oxidase FUB9">
    <location>
        <begin position="1"/>
        <end position="358"/>
    </location>
</feature>
<feature type="domain" description="FMN hydroxy acid dehydrogenase" evidence="1">
    <location>
        <begin position="6"/>
        <end position="350"/>
    </location>
</feature>
<feature type="active site" description="Proton acceptor" evidence="1">
    <location>
        <position position="245"/>
    </location>
</feature>
<feature type="binding site" evidence="1">
    <location>
        <position position="32"/>
    </location>
    <ligand>
        <name>a 2-oxocarboxylate</name>
        <dbReference type="ChEBI" id="CHEBI:35179"/>
    </ligand>
</feature>
<feature type="binding site" evidence="1">
    <location>
        <position position="114"/>
    </location>
    <ligand>
        <name>FMN</name>
        <dbReference type="ChEBI" id="CHEBI:58210"/>
    </ligand>
</feature>
<feature type="binding site" evidence="1">
    <location>
        <position position="138"/>
    </location>
    <ligand>
        <name>FMN</name>
        <dbReference type="ChEBI" id="CHEBI:58210"/>
    </ligand>
</feature>
<feature type="binding site" evidence="1">
    <location>
        <position position="166"/>
    </location>
    <ligand>
        <name>FMN</name>
        <dbReference type="ChEBI" id="CHEBI:58210"/>
    </ligand>
</feature>
<feature type="binding site" evidence="1">
    <location>
        <position position="175"/>
    </location>
    <ligand>
        <name>a 2-oxocarboxylate</name>
        <dbReference type="ChEBI" id="CHEBI:35179"/>
    </ligand>
</feature>
<feature type="binding site" evidence="1">
    <location>
        <position position="221"/>
    </location>
    <ligand>
        <name>FMN</name>
        <dbReference type="ChEBI" id="CHEBI:58210"/>
    </ligand>
</feature>
<feature type="binding site" evidence="1">
    <location>
        <position position="248"/>
    </location>
    <ligand>
        <name>a 2-oxocarboxylate</name>
        <dbReference type="ChEBI" id="CHEBI:35179"/>
    </ligand>
</feature>
<feature type="binding site" evidence="1">
    <location>
        <begin position="276"/>
        <end position="280"/>
    </location>
    <ligand>
        <name>FMN</name>
        <dbReference type="ChEBI" id="CHEBI:58210"/>
    </ligand>
</feature>
<feature type="binding site" evidence="1">
    <location>
        <begin position="299"/>
        <end position="300"/>
    </location>
    <ligand>
        <name>FMN</name>
        <dbReference type="ChEBI" id="CHEBI:58210"/>
    </ligand>
</feature>
<sequence>MSDATSSKPQIFSIQDLKQAASDKMSQMYRDYYNGGAMDNITLANNEAAFDRYLLRPRVLRNVSNIDMTTTLWGTKAALPLGVSPSAMHRLAHADGEVGTSKACAARHVPMILSALSNDTLEDVSGQSSDGSTPYAIQVSPFKNRQITTNLLNRAKAAGYKAVVLTVDAPMFGRRLDDLRNGFSSGGLGGGIPDLSFDTSATWEEKIAWMKSQTDLEIWVKGVTSPLDAQIAIEQGVDGIIISNHGGRQLDTTPATIDILREIAPIAKGKTRIAIDGGFRRGSDIFKAVALGADFVFVGRIAIWGLAYDGSNGVGLALDLLINEFKLCMGLAGCSKISDISPAHLSILNARGVLESVY</sequence>
<protein>
    <recommendedName>
        <fullName evidence="10">Oxidase FUB9</fullName>
        <ecNumber evidence="12">1.-.-.-</ecNumber>
    </recommendedName>
    <alternativeName>
        <fullName evidence="10">Fusaric acid biosynthesis protein 9</fullName>
    </alternativeName>
</protein>
<reference key="1">
    <citation type="journal article" date="2013" name="PLoS Pathog.">
        <title>Deciphering the cryptic genome: genome-wide analyses of the rice pathogen Fusarium fujikuroi reveal complex regulation of secondary metabolism and novel metabolites.</title>
        <authorList>
            <person name="Wiemann P."/>
            <person name="Sieber C.M.K."/>
            <person name="von Bargen K.W."/>
            <person name="Studt L."/>
            <person name="Niehaus E.-M."/>
            <person name="Espino J.J."/>
            <person name="Huss K."/>
            <person name="Michielse C.B."/>
            <person name="Albermann S."/>
            <person name="Wagner D."/>
            <person name="Bergner S.V."/>
            <person name="Connolly L.R."/>
            <person name="Fischer A."/>
            <person name="Reuter G."/>
            <person name="Kleigrewe K."/>
            <person name="Bald T."/>
            <person name="Wingfield B.D."/>
            <person name="Ophir R."/>
            <person name="Freeman S."/>
            <person name="Hippler M."/>
            <person name="Smith K.M."/>
            <person name="Brown D.W."/>
            <person name="Proctor R.H."/>
            <person name="Muensterkoetter M."/>
            <person name="Freitag M."/>
            <person name="Humpf H.-U."/>
            <person name="Gueldener U."/>
            <person name="Tudzynski B."/>
        </authorList>
    </citation>
    <scope>NUCLEOTIDE SEQUENCE [LARGE SCALE GENOMIC DNA]</scope>
    <source>
        <strain>CBS 195.34 / IMI 58289 / NRRL A-6831</strain>
    </source>
</reference>
<reference key="2">
    <citation type="journal article" date="2006" name="Planta">
        <title>Fusaric acid induces apoptosis in saffron root-tip cells: roles of caspase-like activity, cytochrome c, and H2O2.</title>
        <authorList>
            <person name="Samadi L."/>
            <person name="Shahsavan Behboodi B."/>
        </authorList>
    </citation>
    <scope>BIOTECHNOLOGY</scope>
</reference>
<reference key="3">
    <citation type="journal article" date="2008" name="J. Appl. Microbiol.">
        <title>Bikaverin and fusaric acid from Fusarium oxysporum show antioomycete activity against Phytophthora infestans.</title>
        <authorList>
            <person name="Son S.W."/>
            <person name="Kim H.Y."/>
            <person name="Choi G.J."/>
            <person name="Lim H.K."/>
            <person name="Jang K.S."/>
            <person name="Lee S.O."/>
            <person name="Lee S."/>
            <person name="Sung N.D."/>
            <person name="Kim J.C."/>
        </authorList>
    </citation>
    <scope>BIOTECHNOLOGY</scope>
</reference>
<reference key="4">
    <citation type="journal article" date="2011" name="Arch. Pharm. Res.">
        <title>Antimycobacterial activity of fusaric acid from a mangrove endophyte and its metal complexes.</title>
        <authorList>
            <person name="Pan J.H."/>
            <person name="Chen Y."/>
            <person name="Huang Y.H."/>
            <person name="Tao Y.W."/>
            <person name="Wang J."/>
            <person name="Li Y."/>
            <person name="Peng Y."/>
            <person name="Dong T."/>
            <person name="Lai X.M."/>
            <person name="Lin Y.C."/>
        </authorList>
    </citation>
    <scope>BIOTECHNOLOGY</scope>
</reference>
<reference key="5">
    <citation type="journal article" date="2011" name="Toxicon">
        <title>Phytotoxicity of fusaric acid and analogs to cotton.</title>
        <authorList>
            <person name="Stipanovic R.D."/>
            <person name="Puckhaber L.S."/>
            <person name="Liu J."/>
            <person name="Bell A.A."/>
        </authorList>
    </citation>
    <scope>BIOTECHNOLOGY</scope>
</reference>
<reference key="6">
    <citation type="journal article" date="2012" name="Planta Med.">
        <title>In vitro acanthamoebicidal activity of fusaric acid and dehydrofusaric acid from an endophytic fungus Fusarium sp. Tlau3.</title>
        <authorList>
            <person name="Boonman N."/>
            <person name="Prachya S."/>
            <person name="Boonmee A."/>
            <person name="Kittakoop P."/>
            <person name="Wiyakrutta S."/>
            <person name="Sriubolmas N."/>
            <person name="Warit S."/>
            <person name="Dharmkrong-At Chusattayanond A."/>
        </authorList>
    </citation>
    <scope>BIOTECHNOLOGY</scope>
</reference>
<reference key="7">
    <citation type="journal article" date="2013" name="Planta">
        <title>Fusaric acid induction of programmed cell death modulated through nitric oxide signalling in tobacco suspension cells.</title>
        <authorList>
            <person name="Jiao J."/>
            <person name="Zhou B."/>
            <person name="Zhu X."/>
            <person name="Gao Z."/>
            <person name="Liang Y."/>
        </authorList>
    </citation>
    <scope>BIOTECHNOLOGY</scope>
</reference>
<reference key="8">
    <citation type="journal article" date="2013" name="PLoS ONE">
        <title>Contamination of bananas with beauvericin and fusaric acid produced by Fusarium oxysporum f. sp. cubense.</title>
        <authorList>
            <person name="Li C."/>
            <person name="Zuo C."/>
            <person name="Deng G."/>
            <person name="Kuang R."/>
            <person name="Yang Q."/>
            <person name="Hu C."/>
            <person name="Sheng O."/>
            <person name="Zhang S."/>
            <person name="Ma L."/>
            <person name="Wei Y."/>
            <person name="Yang J."/>
            <person name="Liu S."/>
            <person name="Biswas M.K."/>
            <person name="Viljoen A."/>
            <person name="Yi G."/>
        </authorList>
    </citation>
    <scope>BIOTECHNOLOGY</scope>
</reference>
<reference key="9">
    <citation type="journal article" date="2016" name="Environ. Microbiol.">
        <title>Two separate key enzymes and two pathway-specific transcription factors are involved in fusaric acid biosynthesis in Fusarium fujikuroi.</title>
        <authorList>
            <person name="Studt L."/>
            <person name="Janevska S."/>
            <person name="Niehaus E.M."/>
            <person name="Burkhardt I."/>
            <person name="Arndt B."/>
            <person name="Sieber C.M."/>
            <person name="Humpf H.U."/>
            <person name="Dickschat J.S."/>
            <person name="Tudzynski B."/>
        </authorList>
    </citation>
    <scope>FUNCTION</scope>
    <scope>CATALYTIC ACTIVITY</scope>
</reference>
<dbReference type="EC" id="1.-.-.-" evidence="12"/>
<dbReference type="EMBL" id="HF679025">
    <property type="protein sequence ID" value="CCT65194.1"/>
    <property type="molecule type" value="Genomic_DNA"/>
</dbReference>
<dbReference type="SMR" id="S0DRI9"/>
<dbReference type="STRING" id="1279085.S0DRI9"/>
<dbReference type="EnsemblFungi" id="CCT65194">
    <property type="protein sequence ID" value="CCT65194"/>
    <property type="gene ID" value="FFUJ_02116"/>
</dbReference>
<dbReference type="VEuPathDB" id="FungiDB:FFUJ_02116"/>
<dbReference type="HOGENOM" id="CLU_020639_0_0_1"/>
<dbReference type="Proteomes" id="UP000016800">
    <property type="component" value="Chromosome 3"/>
</dbReference>
<dbReference type="GO" id="GO:0010181">
    <property type="term" value="F:FMN binding"/>
    <property type="evidence" value="ECO:0007669"/>
    <property type="project" value="InterPro"/>
</dbReference>
<dbReference type="GO" id="GO:0016491">
    <property type="term" value="F:oxidoreductase activity"/>
    <property type="evidence" value="ECO:0007669"/>
    <property type="project" value="UniProtKB-KW"/>
</dbReference>
<dbReference type="CDD" id="cd02809">
    <property type="entry name" value="alpha_hydroxyacid_oxid_FMN"/>
    <property type="match status" value="1"/>
</dbReference>
<dbReference type="Gene3D" id="3.20.20.70">
    <property type="entry name" value="Aldolase class I"/>
    <property type="match status" value="1"/>
</dbReference>
<dbReference type="InterPro" id="IPR013785">
    <property type="entry name" value="Aldolase_TIM"/>
</dbReference>
<dbReference type="InterPro" id="IPR012133">
    <property type="entry name" value="Alpha-hydoxy_acid_DH_FMN"/>
</dbReference>
<dbReference type="InterPro" id="IPR000262">
    <property type="entry name" value="FMN-dep_DH"/>
</dbReference>
<dbReference type="InterPro" id="IPR037396">
    <property type="entry name" value="FMN_HAD"/>
</dbReference>
<dbReference type="InterPro" id="IPR008259">
    <property type="entry name" value="FMN_hydac_DH_AS"/>
</dbReference>
<dbReference type="PANTHER" id="PTHR10578:SF149">
    <property type="entry name" value="2-HYDROXYACID OXIDASE 2"/>
    <property type="match status" value="1"/>
</dbReference>
<dbReference type="PANTHER" id="PTHR10578">
    <property type="entry name" value="S -2-HYDROXY-ACID OXIDASE-RELATED"/>
    <property type="match status" value="1"/>
</dbReference>
<dbReference type="Pfam" id="PF01070">
    <property type="entry name" value="FMN_dh"/>
    <property type="match status" value="2"/>
</dbReference>
<dbReference type="PIRSF" id="PIRSF000138">
    <property type="entry name" value="Al-hdrx_acd_dh"/>
    <property type="match status" value="1"/>
</dbReference>
<dbReference type="SUPFAM" id="SSF51395">
    <property type="entry name" value="FMN-linked oxidoreductases"/>
    <property type="match status" value="1"/>
</dbReference>
<dbReference type="PROSITE" id="PS00557">
    <property type="entry name" value="FMN_HYDROXY_ACID_DH_1"/>
    <property type="match status" value="1"/>
</dbReference>
<dbReference type="PROSITE" id="PS51349">
    <property type="entry name" value="FMN_HYDROXY_ACID_DH_2"/>
    <property type="match status" value="1"/>
</dbReference>
<evidence type="ECO:0000255" key="1">
    <source>
        <dbReference type="PROSITE-ProRule" id="PRU00683"/>
    </source>
</evidence>
<evidence type="ECO:0000269" key="2">
    <source>
    </source>
</evidence>
<evidence type="ECO:0000269" key="3">
    <source>
    </source>
</evidence>
<evidence type="ECO:0000269" key="4">
    <source>
    </source>
</evidence>
<evidence type="ECO:0000269" key="5">
    <source>
    </source>
</evidence>
<evidence type="ECO:0000269" key="6">
    <source>
    </source>
</evidence>
<evidence type="ECO:0000269" key="7">
    <source>
    </source>
</evidence>
<evidence type="ECO:0000269" key="8">
    <source>
    </source>
</evidence>
<evidence type="ECO:0000269" key="9">
    <source>
    </source>
</evidence>
<evidence type="ECO:0000303" key="10">
    <source>
    </source>
</evidence>
<evidence type="ECO:0000305" key="11"/>
<evidence type="ECO:0000305" key="12">
    <source>
    </source>
</evidence>
<comment type="function">
    <text evidence="9">Oxidase; part of the gene cluster that mediates the biosynthesis of fusaric acid, a mycotoxin with low to moderate toxicity to animals and humans, but with high phytotoxic properties (PubMed:26662839). L-aspartate is suggested as fusaric acid amino acid precursor that is activated and further processed to O-acetyl-L-homoserine by cluster enzymes aspartate kinase FUB3 and homoserine O-acetyltransferase FUB5, as well as enzymes of the primary metabolism (PubMed:26662839). The polyketide synthase (PKS) FUB1 generates the triketide trans-2-hexenal which is presumptively released by the hydrolase FUB4 and linked to the NRPS-bound amino acid precursor by NAD(P)-dependent dehydrogenase FUB6 (PubMed:26662839). FUB1, FUB4, and the non-canonical NRPS Fub8 may form an enzyme complex (PubMed:26662839). Further processing of the NRPS-bound intermediate might be carried out by FUB6 and the sulfhydrylase FUB7, enabling a spontaneous electrocyclization to close the carbon backbone of fusaric acid (PubMed:26662839). Dihydrofusaric acid is likely to be released via reduction by the thioester reductase (TR) domain of FUB8 whereupon the final oxidation to fusaric acid may (also) be performed by the FMN-dependent dehydrogenase FUB9 (PubMed:26662839).</text>
</comment>
<comment type="cofactor">
    <cofactor evidence="1">
        <name>FMN</name>
        <dbReference type="ChEBI" id="CHEBI:58210"/>
    </cofactor>
</comment>
<comment type="pathway">
    <text evidence="9">Mycotoxin biosynthesis.</text>
</comment>
<comment type="biotechnology">
    <text evidence="2 3 4 5 6 7 8">Fusaric acid is phytotoxic to plants such as cotton and banana (PubMed:20955724, PubMed:23922960). It has been shown to induce programmed cell death in plants (PubMed:16868776, PubMed:23838885). In addition to a mild toxicity to animals, fusaric acid exhibits acanthamoebicidal, antioomycete, and antimycobacterial activities (PubMed:17927749, PubMed:21811925, PubMed:22864988).</text>
</comment>
<comment type="similarity">
    <text evidence="11">Belongs to the FMN-dependent alpha-hydroxy acid dehydrogenase family.</text>
</comment>
<name>FUB9_GIBF5</name>
<organism>
    <name type="scientific">Gibberella fujikuroi (strain CBS 195.34 / IMI 58289 / NRRL A-6831)</name>
    <name type="common">Bakanae and foot rot disease fungus</name>
    <name type="synonym">Fusarium fujikuroi</name>
    <dbReference type="NCBI Taxonomy" id="1279085"/>
    <lineage>
        <taxon>Eukaryota</taxon>
        <taxon>Fungi</taxon>
        <taxon>Dikarya</taxon>
        <taxon>Ascomycota</taxon>
        <taxon>Pezizomycotina</taxon>
        <taxon>Sordariomycetes</taxon>
        <taxon>Hypocreomycetidae</taxon>
        <taxon>Hypocreales</taxon>
        <taxon>Nectriaceae</taxon>
        <taxon>Fusarium</taxon>
        <taxon>Fusarium fujikuroi species complex</taxon>
    </lineage>
</organism>
<accession>S0DRI9</accession>
<gene>
    <name evidence="10" type="primary">FUB9</name>
    <name type="ORF">FFUJ_02116</name>
</gene>
<proteinExistence type="evidence at protein level"/>
<keyword id="KW-0285">Flavoprotein</keyword>
<keyword id="KW-0288">FMN</keyword>
<keyword id="KW-0560">Oxidoreductase</keyword>
<keyword id="KW-1185">Reference proteome</keyword>